<dbReference type="EMBL" id="CP000727">
    <property type="protein sequence ID" value="ABS37781.1"/>
    <property type="molecule type" value="Genomic_DNA"/>
</dbReference>
<dbReference type="EMBL" id="AM412317">
    <property type="protein sequence ID" value="CAL85005.1"/>
    <property type="molecule type" value="Genomic_DNA"/>
</dbReference>
<dbReference type="RefSeq" id="WP_003357662.1">
    <property type="nucleotide sequence ID" value="NC_009698.1"/>
</dbReference>
<dbReference type="RefSeq" id="YP_001255926.1">
    <property type="nucleotide sequence ID" value="NC_009495.1"/>
</dbReference>
<dbReference type="RefSeq" id="YP_001389167.1">
    <property type="nucleotide sequence ID" value="NC_009698.1"/>
</dbReference>
<dbReference type="SMR" id="A5I7H0"/>
<dbReference type="GeneID" id="5184277"/>
<dbReference type="KEGG" id="cbh:CLC_3389"/>
<dbReference type="KEGG" id="cbo:CBO3445"/>
<dbReference type="PATRIC" id="fig|413999.7.peg.3421"/>
<dbReference type="HOGENOM" id="CLU_046483_2_1_9"/>
<dbReference type="PRO" id="PR:A5I7H0"/>
<dbReference type="Proteomes" id="UP000001986">
    <property type="component" value="Chromosome"/>
</dbReference>
<dbReference type="GO" id="GO:0022627">
    <property type="term" value="C:cytosolic small ribosomal subunit"/>
    <property type="evidence" value="ECO:0000318"/>
    <property type="project" value="GO_Central"/>
</dbReference>
<dbReference type="GO" id="GO:0003723">
    <property type="term" value="F:RNA binding"/>
    <property type="evidence" value="ECO:0000318"/>
    <property type="project" value="GO_Central"/>
</dbReference>
<dbReference type="GO" id="GO:0003735">
    <property type="term" value="F:structural constituent of ribosome"/>
    <property type="evidence" value="ECO:0000318"/>
    <property type="project" value="GO_Central"/>
</dbReference>
<dbReference type="GO" id="GO:0006412">
    <property type="term" value="P:translation"/>
    <property type="evidence" value="ECO:0007669"/>
    <property type="project" value="UniProtKB-UniRule"/>
</dbReference>
<dbReference type="FunFam" id="3.30.230.10:FF:000001">
    <property type="entry name" value="30S ribosomal protein S9"/>
    <property type="match status" value="1"/>
</dbReference>
<dbReference type="Gene3D" id="3.30.230.10">
    <property type="match status" value="1"/>
</dbReference>
<dbReference type="HAMAP" id="MF_00532_B">
    <property type="entry name" value="Ribosomal_uS9_B"/>
    <property type="match status" value="1"/>
</dbReference>
<dbReference type="InterPro" id="IPR020568">
    <property type="entry name" value="Ribosomal_Su5_D2-typ_SF"/>
</dbReference>
<dbReference type="InterPro" id="IPR000754">
    <property type="entry name" value="Ribosomal_uS9"/>
</dbReference>
<dbReference type="InterPro" id="IPR023035">
    <property type="entry name" value="Ribosomal_uS9_bac/plastid"/>
</dbReference>
<dbReference type="InterPro" id="IPR020574">
    <property type="entry name" value="Ribosomal_uS9_CS"/>
</dbReference>
<dbReference type="InterPro" id="IPR014721">
    <property type="entry name" value="Ribsml_uS5_D2-typ_fold_subgr"/>
</dbReference>
<dbReference type="NCBIfam" id="NF001099">
    <property type="entry name" value="PRK00132.1"/>
    <property type="match status" value="1"/>
</dbReference>
<dbReference type="PANTHER" id="PTHR21569">
    <property type="entry name" value="RIBOSOMAL PROTEIN S9"/>
    <property type="match status" value="1"/>
</dbReference>
<dbReference type="PANTHER" id="PTHR21569:SF1">
    <property type="entry name" value="SMALL RIBOSOMAL SUBUNIT PROTEIN US9M"/>
    <property type="match status" value="1"/>
</dbReference>
<dbReference type="Pfam" id="PF00380">
    <property type="entry name" value="Ribosomal_S9"/>
    <property type="match status" value="1"/>
</dbReference>
<dbReference type="SUPFAM" id="SSF54211">
    <property type="entry name" value="Ribosomal protein S5 domain 2-like"/>
    <property type="match status" value="1"/>
</dbReference>
<dbReference type="PROSITE" id="PS00360">
    <property type="entry name" value="RIBOSOMAL_S9"/>
    <property type="match status" value="1"/>
</dbReference>
<organism>
    <name type="scientific">Clostridium botulinum (strain Hall / ATCC 3502 / NCTC 13319 / Type A)</name>
    <dbReference type="NCBI Taxonomy" id="441771"/>
    <lineage>
        <taxon>Bacteria</taxon>
        <taxon>Bacillati</taxon>
        <taxon>Bacillota</taxon>
        <taxon>Clostridia</taxon>
        <taxon>Eubacteriales</taxon>
        <taxon>Clostridiaceae</taxon>
        <taxon>Clostridium</taxon>
    </lineage>
</organism>
<reference key="1">
    <citation type="journal article" date="2007" name="Genome Res.">
        <title>Genome sequence of a proteolytic (Group I) Clostridium botulinum strain Hall A and comparative analysis of the clostridial genomes.</title>
        <authorList>
            <person name="Sebaihia M."/>
            <person name="Peck M.W."/>
            <person name="Minton N.P."/>
            <person name="Thomson N.R."/>
            <person name="Holden M.T.G."/>
            <person name="Mitchell W.J."/>
            <person name="Carter A.T."/>
            <person name="Bentley S.D."/>
            <person name="Mason D.R."/>
            <person name="Crossman L."/>
            <person name="Paul C.J."/>
            <person name="Ivens A."/>
            <person name="Wells-Bennik M.H.J."/>
            <person name="Davis I.J."/>
            <person name="Cerdeno-Tarraga A.M."/>
            <person name="Churcher C."/>
            <person name="Quail M.A."/>
            <person name="Chillingworth T."/>
            <person name="Feltwell T."/>
            <person name="Fraser A."/>
            <person name="Goodhead I."/>
            <person name="Hance Z."/>
            <person name="Jagels K."/>
            <person name="Larke N."/>
            <person name="Maddison M."/>
            <person name="Moule S."/>
            <person name="Mungall K."/>
            <person name="Norbertczak H."/>
            <person name="Rabbinowitsch E."/>
            <person name="Sanders M."/>
            <person name="Simmonds M."/>
            <person name="White B."/>
            <person name="Whithead S."/>
            <person name="Parkhill J."/>
        </authorList>
    </citation>
    <scope>NUCLEOTIDE SEQUENCE [LARGE SCALE GENOMIC DNA]</scope>
    <source>
        <strain>Hall / ATCC 3502 / NCTC 13319 / Type A</strain>
    </source>
</reference>
<reference key="2">
    <citation type="journal article" date="2007" name="PLoS ONE">
        <title>Analysis of the neurotoxin complex genes in Clostridium botulinum A1-A4 and B1 strains: BoNT/A3, /Ba4 and /B1 clusters are located within plasmids.</title>
        <authorList>
            <person name="Smith T.J."/>
            <person name="Hill K.K."/>
            <person name="Foley B.T."/>
            <person name="Detter J.C."/>
            <person name="Munk A.C."/>
            <person name="Bruce D.C."/>
            <person name="Doggett N.A."/>
            <person name="Smith L.A."/>
            <person name="Marks J.D."/>
            <person name="Xie G."/>
            <person name="Brettin T.S."/>
        </authorList>
    </citation>
    <scope>NUCLEOTIDE SEQUENCE [LARGE SCALE GENOMIC DNA]</scope>
    <source>
        <strain>Hall / ATCC 3502 / NCTC 13319 / Type A</strain>
    </source>
</reference>
<evidence type="ECO:0000255" key="1">
    <source>
        <dbReference type="HAMAP-Rule" id="MF_00532"/>
    </source>
</evidence>
<evidence type="ECO:0000256" key="2">
    <source>
        <dbReference type="SAM" id="MobiDB-lite"/>
    </source>
</evidence>
<evidence type="ECO:0000305" key="3"/>
<name>RS9_CLOBH</name>
<protein>
    <recommendedName>
        <fullName evidence="1">Small ribosomal subunit protein uS9</fullName>
    </recommendedName>
    <alternativeName>
        <fullName evidence="3">30S ribosomal protein S9</fullName>
    </alternativeName>
</protein>
<gene>
    <name evidence="1" type="primary">rpsI</name>
    <name type="ordered locus">CBO3445</name>
    <name type="ordered locus">CLC_3389</name>
</gene>
<comment type="similarity">
    <text evidence="1">Belongs to the universal ribosomal protein uS9 family.</text>
</comment>
<keyword id="KW-1185">Reference proteome</keyword>
<keyword id="KW-0687">Ribonucleoprotein</keyword>
<keyword id="KW-0689">Ribosomal protein</keyword>
<accession>A5I7H0</accession>
<accession>A7G8Q2</accession>
<feature type="chain" id="PRO_1000051205" description="Small ribosomal subunit protein uS9">
    <location>
        <begin position="1"/>
        <end position="130"/>
    </location>
</feature>
<feature type="region of interest" description="Disordered" evidence="2">
    <location>
        <begin position="102"/>
        <end position="130"/>
    </location>
</feature>
<feature type="compositionally biased region" description="Basic residues" evidence="2">
    <location>
        <begin position="111"/>
        <end position="130"/>
    </location>
</feature>
<sequence length="130" mass="14673">MAKVQYFGTGRRKKSVARVRLVAGDGKVIINNRDIENYFPIETLRVIVNQPLVLTETKDKYDVLVNVHGGGFTGQAGAVRHGISRALVKADENMKSSLKKAGFLTRDPRMKERKKYGLKKARRSPQFSKR</sequence>
<proteinExistence type="inferred from homology"/>